<reference key="1">
    <citation type="journal article" date="1998" name="Science">
        <title>Genome sequence of an obligate intracellular pathogen of humans: Chlamydia trachomatis.</title>
        <authorList>
            <person name="Stephens R.S."/>
            <person name="Kalman S."/>
            <person name="Lammel C.J."/>
            <person name="Fan J."/>
            <person name="Marathe R."/>
            <person name="Aravind L."/>
            <person name="Mitchell W.P."/>
            <person name="Olinger L."/>
            <person name="Tatusov R.L."/>
            <person name="Zhao Q."/>
            <person name="Koonin E.V."/>
            <person name="Davis R.W."/>
        </authorList>
    </citation>
    <scope>NUCLEOTIDE SEQUENCE [LARGE SCALE GENOMIC DNA]</scope>
    <source>
        <strain>ATCC VR-885 / DSM 19411 / UW-3/Cx</strain>
    </source>
</reference>
<name>DCD_CHLTR</name>
<accession>O84042</accession>
<feature type="chain" id="PRO_0000155977" description="dCTP deaminase">
    <location>
        <begin position="1"/>
        <end position="190"/>
    </location>
</feature>
<feature type="active site" description="Proton donor/acceptor" evidence="1">
    <location>
        <position position="139"/>
    </location>
</feature>
<feature type="binding site" evidence="1">
    <location>
        <begin position="113"/>
        <end position="118"/>
    </location>
    <ligand>
        <name>dCTP</name>
        <dbReference type="ChEBI" id="CHEBI:61481"/>
    </ligand>
</feature>
<feature type="binding site" evidence="1">
    <location>
        <position position="158"/>
    </location>
    <ligand>
        <name>dCTP</name>
        <dbReference type="ChEBI" id="CHEBI:61481"/>
    </ligand>
</feature>
<feature type="binding site" evidence="1">
    <location>
        <position position="172"/>
    </location>
    <ligand>
        <name>dCTP</name>
        <dbReference type="ChEBI" id="CHEBI:61481"/>
    </ligand>
</feature>
<feature type="binding site" evidence="1">
    <location>
        <position position="181"/>
    </location>
    <ligand>
        <name>dCTP</name>
        <dbReference type="ChEBI" id="CHEBI:61481"/>
    </ligand>
</feature>
<feature type="binding site" evidence="1">
    <location>
        <position position="182"/>
    </location>
    <ligand>
        <name>dCTP</name>
        <dbReference type="ChEBI" id="CHEBI:61481"/>
    </ligand>
</feature>
<evidence type="ECO:0000255" key="1">
    <source>
        <dbReference type="HAMAP-Rule" id="MF_00146"/>
    </source>
</evidence>
<protein>
    <recommendedName>
        <fullName evidence="1">dCTP deaminase</fullName>
        <ecNumber evidence="1">3.5.4.13</ecNumber>
    </recommendedName>
    <alternativeName>
        <fullName evidence="1">Deoxycytidine triphosphate deaminase</fullName>
    </alternativeName>
</protein>
<dbReference type="EC" id="3.5.4.13" evidence="1"/>
<dbReference type="EMBL" id="AE001273">
    <property type="protein sequence ID" value="AAC67629.1"/>
    <property type="molecule type" value="Genomic_DNA"/>
</dbReference>
<dbReference type="PIR" id="B71565">
    <property type="entry name" value="B71565"/>
</dbReference>
<dbReference type="RefSeq" id="NP_219541.1">
    <property type="nucleotide sequence ID" value="NC_000117.1"/>
</dbReference>
<dbReference type="RefSeq" id="WP_009871386.1">
    <property type="nucleotide sequence ID" value="NC_000117.1"/>
</dbReference>
<dbReference type="SMR" id="O84042"/>
<dbReference type="STRING" id="272561.CT_039"/>
<dbReference type="EnsemblBacteria" id="AAC67629">
    <property type="protein sequence ID" value="AAC67629"/>
    <property type="gene ID" value="CT_039"/>
</dbReference>
<dbReference type="GeneID" id="884070"/>
<dbReference type="KEGG" id="ctr:CT_039"/>
<dbReference type="PATRIC" id="fig|272561.5.peg.44"/>
<dbReference type="HOGENOM" id="CLU_087476_4_0_0"/>
<dbReference type="InParanoid" id="O84042"/>
<dbReference type="OrthoDB" id="9780202at2"/>
<dbReference type="UniPathway" id="UPA00610">
    <property type="reaction ID" value="UER00665"/>
</dbReference>
<dbReference type="Proteomes" id="UP000000431">
    <property type="component" value="Chromosome"/>
</dbReference>
<dbReference type="GO" id="GO:0008829">
    <property type="term" value="F:dCTP deaminase activity"/>
    <property type="evidence" value="ECO:0000318"/>
    <property type="project" value="GO_Central"/>
</dbReference>
<dbReference type="GO" id="GO:0000166">
    <property type="term" value="F:nucleotide binding"/>
    <property type="evidence" value="ECO:0007669"/>
    <property type="project" value="UniProtKB-KW"/>
</dbReference>
<dbReference type="GO" id="GO:0006226">
    <property type="term" value="P:dUMP biosynthetic process"/>
    <property type="evidence" value="ECO:0007669"/>
    <property type="project" value="UniProtKB-UniPathway"/>
</dbReference>
<dbReference type="GO" id="GO:0006229">
    <property type="term" value="P:dUTP biosynthetic process"/>
    <property type="evidence" value="ECO:0007669"/>
    <property type="project" value="UniProtKB-UniRule"/>
</dbReference>
<dbReference type="GO" id="GO:0015949">
    <property type="term" value="P:nucleobase-containing small molecule interconversion"/>
    <property type="evidence" value="ECO:0000318"/>
    <property type="project" value="GO_Central"/>
</dbReference>
<dbReference type="CDD" id="cd07557">
    <property type="entry name" value="trimeric_dUTPase"/>
    <property type="match status" value="1"/>
</dbReference>
<dbReference type="FunFam" id="2.70.40.10:FF:000001">
    <property type="entry name" value="dCTP deaminase"/>
    <property type="match status" value="1"/>
</dbReference>
<dbReference type="Gene3D" id="2.70.40.10">
    <property type="match status" value="1"/>
</dbReference>
<dbReference type="HAMAP" id="MF_00146">
    <property type="entry name" value="dCTP_deaminase"/>
    <property type="match status" value="1"/>
</dbReference>
<dbReference type="InterPro" id="IPR011962">
    <property type="entry name" value="dCTP_deaminase"/>
</dbReference>
<dbReference type="InterPro" id="IPR036157">
    <property type="entry name" value="dUTPase-like_sf"/>
</dbReference>
<dbReference type="InterPro" id="IPR033704">
    <property type="entry name" value="dUTPase_trimeric"/>
</dbReference>
<dbReference type="NCBIfam" id="TIGR02274">
    <property type="entry name" value="dCTP_deam"/>
    <property type="match status" value="1"/>
</dbReference>
<dbReference type="PANTHER" id="PTHR42680">
    <property type="entry name" value="DCTP DEAMINASE"/>
    <property type="match status" value="1"/>
</dbReference>
<dbReference type="PANTHER" id="PTHR42680:SF3">
    <property type="entry name" value="DCTP DEAMINASE"/>
    <property type="match status" value="1"/>
</dbReference>
<dbReference type="Pfam" id="PF22769">
    <property type="entry name" value="DCD"/>
    <property type="match status" value="1"/>
</dbReference>
<dbReference type="SUPFAM" id="SSF51283">
    <property type="entry name" value="dUTPase-like"/>
    <property type="match status" value="1"/>
</dbReference>
<keyword id="KW-0378">Hydrolase</keyword>
<keyword id="KW-0546">Nucleotide metabolism</keyword>
<keyword id="KW-0547">Nucleotide-binding</keyword>
<keyword id="KW-1185">Reference proteome</keyword>
<gene>
    <name evidence="1" type="primary">dcd</name>
    <name type="ordered locus">CT_039</name>
</gene>
<comment type="function">
    <text evidence="1">Catalyzes the deamination of dCTP to dUTP.</text>
</comment>
<comment type="catalytic activity">
    <reaction evidence="1">
        <text>dCTP + H2O + H(+) = dUTP + NH4(+)</text>
        <dbReference type="Rhea" id="RHEA:22680"/>
        <dbReference type="ChEBI" id="CHEBI:15377"/>
        <dbReference type="ChEBI" id="CHEBI:15378"/>
        <dbReference type="ChEBI" id="CHEBI:28938"/>
        <dbReference type="ChEBI" id="CHEBI:61481"/>
        <dbReference type="ChEBI" id="CHEBI:61555"/>
        <dbReference type="EC" id="3.5.4.13"/>
    </reaction>
</comment>
<comment type="pathway">
    <text evidence="1">Pyrimidine metabolism; dUMP biosynthesis; dUMP from dCTP (dUTP route): step 1/2.</text>
</comment>
<comment type="subunit">
    <text evidence="1">Homotrimer.</text>
</comment>
<comment type="similarity">
    <text evidence="1">Belongs to the dCTP deaminase family.</text>
</comment>
<sequence>MGIKEDNWIRKMAIEEGMIEPFADSQVKLHPETGEKLISYGLSSYGYDLRISREFKVFTNVYNSLVDPKCFTEDALISIVDDVCIIPPNSFALARSVEYFRIPRNVLTVCIGKSTYARCGLIVNVTPFEPEWEGYVTIEISNTTPLPAKVYANEGIAQVLFFEGDATCDVSYAERQGKYQKQQGITIPFV</sequence>
<organism>
    <name type="scientific">Chlamydia trachomatis serovar D (strain ATCC VR-885 / DSM 19411 / UW-3/Cx)</name>
    <dbReference type="NCBI Taxonomy" id="272561"/>
    <lineage>
        <taxon>Bacteria</taxon>
        <taxon>Pseudomonadati</taxon>
        <taxon>Chlamydiota</taxon>
        <taxon>Chlamydiia</taxon>
        <taxon>Chlamydiales</taxon>
        <taxon>Chlamydiaceae</taxon>
        <taxon>Chlamydia/Chlamydophila group</taxon>
        <taxon>Chlamydia</taxon>
    </lineage>
</organism>
<proteinExistence type="inferred from homology"/>